<feature type="chain" id="PRO_0000410505" description="Uncharacterized protein 075L">
    <location>
        <begin position="1"/>
        <end position="84"/>
    </location>
</feature>
<feature type="domain" description="LITAF" evidence="1">
    <location>
        <begin position="1"/>
        <end position="83"/>
    </location>
</feature>
<feature type="region of interest" description="Membrane-binding amphipathic helix" evidence="2">
    <location>
        <begin position="39"/>
        <end position="61"/>
    </location>
</feature>
<feature type="binding site" evidence="1">
    <location>
        <position position="21"/>
    </location>
    <ligand>
        <name>Zn(2+)</name>
        <dbReference type="ChEBI" id="CHEBI:29105"/>
    </ligand>
</feature>
<feature type="binding site" evidence="1">
    <location>
        <position position="24"/>
    </location>
    <ligand>
        <name>Zn(2+)</name>
        <dbReference type="ChEBI" id="CHEBI:29105"/>
    </ligand>
</feature>
<feature type="binding site" evidence="1">
    <location>
        <position position="71"/>
    </location>
    <ligand>
        <name>Zn(2+)</name>
        <dbReference type="ChEBI" id="CHEBI:29105"/>
    </ligand>
</feature>
<feature type="binding site" evidence="1">
    <location>
        <position position="74"/>
    </location>
    <ligand>
        <name>Zn(2+)</name>
        <dbReference type="ChEBI" id="CHEBI:29105"/>
    </ligand>
</feature>
<dbReference type="EMBL" id="AY548484">
    <property type="protein sequence ID" value="AAT09735.1"/>
    <property type="molecule type" value="Genomic_DNA"/>
</dbReference>
<dbReference type="RefSeq" id="YP_031654.1">
    <property type="nucleotide sequence ID" value="NC_005946.1"/>
</dbReference>
<dbReference type="KEGG" id="vg:2947794"/>
<dbReference type="Proteomes" id="UP000008770">
    <property type="component" value="Segment"/>
</dbReference>
<dbReference type="GO" id="GO:0033644">
    <property type="term" value="C:host cell membrane"/>
    <property type="evidence" value="ECO:0007669"/>
    <property type="project" value="UniProtKB-SubCell"/>
</dbReference>
<dbReference type="GO" id="GO:0016020">
    <property type="term" value="C:membrane"/>
    <property type="evidence" value="ECO:0007669"/>
    <property type="project" value="UniProtKB-KW"/>
</dbReference>
<dbReference type="GO" id="GO:0008270">
    <property type="term" value="F:zinc ion binding"/>
    <property type="evidence" value="ECO:0007669"/>
    <property type="project" value="TreeGrafter"/>
</dbReference>
<dbReference type="InterPro" id="IPR006629">
    <property type="entry name" value="LITAF"/>
</dbReference>
<dbReference type="InterPro" id="IPR037519">
    <property type="entry name" value="LITAF_fam"/>
</dbReference>
<dbReference type="PANTHER" id="PTHR23292">
    <property type="entry name" value="LIPOPOLYSACCHARIDE-INDUCED TUMOR NECROSIS FACTOR-ALPHA FACTOR"/>
    <property type="match status" value="1"/>
</dbReference>
<dbReference type="PANTHER" id="PTHR23292:SF46">
    <property type="entry name" value="LIPOPOLYSACCHARIDE-INDUCED TUMOR NECROSIS FACTOR-ALPHA FACTOR HOMOLOG"/>
    <property type="match status" value="1"/>
</dbReference>
<dbReference type="Pfam" id="PF10601">
    <property type="entry name" value="zf-LITAF-like"/>
    <property type="match status" value="1"/>
</dbReference>
<dbReference type="SMART" id="SM00714">
    <property type="entry name" value="LITAF"/>
    <property type="match status" value="1"/>
</dbReference>
<dbReference type="PROSITE" id="PS51837">
    <property type="entry name" value="LITAF"/>
    <property type="match status" value="1"/>
</dbReference>
<accession>Q6GZQ0</accession>
<reference key="1">
    <citation type="journal article" date="2004" name="Virology">
        <title>Comparative genomic analyses of frog virus 3, type species of the genus Ranavirus (family Iridoviridae).</title>
        <authorList>
            <person name="Tan W.G."/>
            <person name="Barkman T.J."/>
            <person name="Gregory Chinchar V."/>
            <person name="Essani K."/>
        </authorList>
    </citation>
    <scope>NUCLEOTIDE SEQUENCE [LARGE SCALE GENOMIC DNA]</scope>
</reference>
<organismHost>
    <name type="scientific">Dryophytes versicolor</name>
    <name type="common">chameleon treefrog</name>
    <dbReference type="NCBI Taxonomy" id="30343"/>
</organismHost>
<organismHost>
    <name type="scientific">Lithobates pipiens</name>
    <name type="common">Northern leopard frog</name>
    <name type="synonym">Rana pipiens</name>
    <dbReference type="NCBI Taxonomy" id="8404"/>
</organismHost>
<organismHost>
    <name type="scientific">Lithobates sylvaticus</name>
    <name type="common">Wood frog</name>
    <name type="synonym">Rana sylvatica</name>
    <dbReference type="NCBI Taxonomy" id="45438"/>
</organismHost>
<organismHost>
    <name type="scientific">Notophthalmus viridescens</name>
    <name type="common">Eastern newt</name>
    <name type="synonym">Triturus viridescens</name>
    <dbReference type="NCBI Taxonomy" id="8316"/>
</organismHost>
<proteinExistence type="predicted"/>
<name>075L_FRG3G</name>
<organism>
    <name type="scientific">Frog virus 3 (isolate Goorha)</name>
    <name type="common">FV-3</name>
    <dbReference type="NCBI Taxonomy" id="654924"/>
    <lineage>
        <taxon>Viruses</taxon>
        <taxon>Varidnaviria</taxon>
        <taxon>Bamfordvirae</taxon>
        <taxon>Nucleocytoviricota</taxon>
        <taxon>Megaviricetes</taxon>
        <taxon>Pimascovirales</taxon>
        <taxon>Iridoviridae</taxon>
        <taxon>Alphairidovirinae</taxon>
        <taxon>Ranavirus</taxon>
        <taxon>Frog virus 3</taxon>
    </lineage>
</organism>
<comment type="subcellular location">
    <subcellularLocation>
        <location evidence="2">Host membrane</location>
        <topology evidence="2">Peripheral membrane protein</topology>
    </subcellularLocation>
</comment>
<protein>
    <recommendedName>
        <fullName>Uncharacterized protein 075L</fullName>
    </recommendedName>
</protein>
<evidence type="ECO:0000255" key="1">
    <source>
        <dbReference type="PROSITE-ProRule" id="PRU01181"/>
    </source>
</evidence>
<evidence type="ECO:0000305" key="2"/>
<keyword id="KW-1043">Host membrane</keyword>
<keyword id="KW-0472">Membrane</keyword>
<keyword id="KW-0479">Metal-binding</keyword>
<keyword id="KW-1185">Reference proteome</keyword>
<keyword id="KW-0862">Zinc</keyword>
<sequence length="84" mass="9258">MDDKFTTLPCELEDYPGSITCPHCSAQITTAVDHVVGKMSWVVCTAITLACLPCCCIPFLCNSTKDVRHTCPKCKQAVFVYKIL</sequence>
<gene>
    <name type="ORF">FV3-075L</name>
</gene>